<gene>
    <name evidence="1" type="primary">murR</name>
    <name type="ordered locus">ECIAI39_2572</name>
</gene>
<accession>B7NPW3</accession>
<evidence type="ECO:0000255" key="1">
    <source>
        <dbReference type="HAMAP-Rule" id="MF_02108"/>
    </source>
</evidence>
<sequence length="285" mass="31413">MLYLTKIRNAESEFTGNEQKIADFLRANVSELKSVSSRKMAKQLGISQSSIVKFAQKLGAQGFTELRMALIGEYSASREKTNATALHLHSSITSDDSLEVIARKLNREKEQALEQTCALFDYARLQKIIEVISKAPFIQITGLGGSALVGRDLSFKLMKIGYRVTCEADTHVQATVSQALKKGDVQIAISYSGSKKEIVLCAEVARKQGATVIAITSLTDSPLRRLAHYTLDTVSGETEWRSSSMSTRTAQNSVTDLLFVGLVQLNDVESLKMIERSSELTQRLK</sequence>
<feature type="chain" id="PRO_0000387766" description="HTH-type transcriptional regulator MurR">
    <location>
        <begin position="1"/>
        <end position="285"/>
    </location>
</feature>
<feature type="domain" description="HTH rpiR-type" evidence="1">
    <location>
        <begin position="1"/>
        <end position="77"/>
    </location>
</feature>
<feature type="domain" description="SIS" evidence="1">
    <location>
        <begin position="128"/>
        <end position="268"/>
    </location>
</feature>
<feature type="DNA-binding region" description="H-T-H motif" evidence="1">
    <location>
        <begin position="37"/>
        <end position="56"/>
    </location>
</feature>
<reference key="1">
    <citation type="journal article" date="2009" name="PLoS Genet.">
        <title>Organised genome dynamics in the Escherichia coli species results in highly diverse adaptive paths.</title>
        <authorList>
            <person name="Touchon M."/>
            <person name="Hoede C."/>
            <person name="Tenaillon O."/>
            <person name="Barbe V."/>
            <person name="Baeriswyl S."/>
            <person name="Bidet P."/>
            <person name="Bingen E."/>
            <person name="Bonacorsi S."/>
            <person name="Bouchier C."/>
            <person name="Bouvet O."/>
            <person name="Calteau A."/>
            <person name="Chiapello H."/>
            <person name="Clermont O."/>
            <person name="Cruveiller S."/>
            <person name="Danchin A."/>
            <person name="Diard M."/>
            <person name="Dossat C."/>
            <person name="Karoui M.E."/>
            <person name="Frapy E."/>
            <person name="Garry L."/>
            <person name="Ghigo J.M."/>
            <person name="Gilles A.M."/>
            <person name="Johnson J."/>
            <person name="Le Bouguenec C."/>
            <person name="Lescat M."/>
            <person name="Mangenot S."/>
            <person name="Martinez-Jehanne V."/>
            <person name="Matic I."/>
            <person name="Nassif X."/>
            <person name="Oztas S."/>
            <person name="Petit M.A."/>
            <person name="Pichon C."/>
            <person name="Rouy Z."/>
            <person name="Ruf C.S."/>
            <person name="Schneider D."/>
            <person name="Tourret J."/>
            <person name="Vacherie B."/>
            <person name="Vallenet D."/>
            <person name="Medigue C."/>
            <person name="Rocha E.P.C."/>
            <person name="Denamur E."/>
        </authorList>
    </citation>
    <scope>NUCLEOTIDE SEQUENCE [LARGE SCALE GENOMIC DNA]</scope>
    <source>
        <strain>IAI39 / ExPEC</strain>
    </source>
</reference>
<organism>
    <name type="scientific">Escherichia coli O7:K1 (strain IAI39 / ExPEC)</name>
    <dbReference type="NCBI Taxonomy" id="585057"/>
    <lineage>
        <taxon>Bacteria</taxon>
        <taxon>Pseudomonadati</taxon>
        <taxon>Pseudomonadota</taxon>
        <taxon>Gammaproteobacteria</taxon>
        <taxon>Enterobacterales</taxon>
        <taxon>Enterobacteriaceae</taxon>
        <taxon>Escherichia</taxon>
    </lineage>
</organism>
<proteinExistence type="inferred from homology"/>
<comment type="function">
    <text evidence="1">Represses the expression of the murPQ operon involved in the uptake and degradation of N-acetylmuramic acid (MurNAc). Binds to two adjacent inverted repeats within the operator region. MurNAc 6-phosphate, the substrate of MurQ, is the specific inducer that weakens binding of MurR to the operator.</text>
</comment>
<comment type="pathway">
    <text>Amino-sugar metabolism; N-acetylmuramate degradation [regulation].</text>
</comment>
<comment type="subunit">
    <text evidence="1">Homotetramer.</text>
</comment>
<dbReference type="EMBL" id="CU928164">
    <property type="protein sequence ID" value="CAR18696.1"/>
    <property type="molecule type" value="Genomic_DNA"/>
</dbReference>
<dbReference type="RefSeq" id="WP_000966460.1">
    <property type="nucleotide sequence ID" value="NC_011750.1"/>
</dbReference>
<dbReference type="RefSeq" id="YP_002408522.1">
    <property type="nucleotide sequence ID" value="NC_011750.1"/>
</dbReference>
<dbReference type="SMR" id="B7NPW3"/>
<dbReference type="STRING" id="585057.ECIAI39_2572"/>
<dbReference type="KEGG" id="ect:ECIAI39_2572"/>
<dbReference type="PATRIC" id="fig|585057.6.peg.2678"/>
<dbReference type="HOGENOM" id="CLU_055769_0_2_6"/>
<dbReference type="UniPathway" id="UPA00342"/>
<dbReference type="Proteomes" id="UP000000749">
    <property type="component" value="Chromosome"/>
</dbReference>
<dbReference type="GO" id="GO:0097367">
    <property type="term" value="F:carbohydrate derivative binding"/>
    <property type="evidence" value="ECO:0007669"/>
    <property type="project" value="InterPro"/>
</dbReference>
<dbReference type="GO" id="GO:0003677">
    <property type="term" value="F:DNA binding"/>
    <property type="evidence" value="ECO:0007669"/>
    <property type="project" value="UniProtKB-KW"/>
</dbReference>
<dbReference type="GO" id="GO:0003700">
    <property type="term" value="F:DNA-binding transcription factor activity"/>
    <property type="evidence" value="ECO:0007669"/>
    <property type="project" value="UniProtKB-UniRule"/>
</dbReference>
<dbReference type="GO" id="GO:1901135">
    <property type="term" value="P:carbohydrate derivative metabolic process"/>
    <property type="evidence" value="ECO:0007669"/>
    <property type="project" value="InterPro"/>
</dbReference>
<dbReference type="GO" id="GO:0097173">
    <property type="term" value="P:N-acetylmuramic acid catabolic process"/>
    <property type="evidence" value="ECO:0007669"/>
    <property type="project" value="UniProtKB-UniPathway"/>
</dbReference>
<dbReference type="GO" id="GO:0045892">
    <property type="term" value="P:negative regulation of DNA-templated transcription"/>
    <property type="evidence" value="ECO:0007669"/>
    <property type="project" value="UniProtKB-UniRule"/>
</dbReference>
<dbReference type="GO" id="GO:0043470">
    <property type="term" value="P:regulation of carbohydrate catabolic process"/>
    <property type="evidence" value="ECO:0007669"/>
    <property type="project" value="UniProtKB-UniRule"/>
</dbReference>
<dbReference type="CDD" id="cd05013">
    <property type="entry name" value="SIS_RpiR"/>
    <property type="match status" value="1"/>
</dbReference>
<dbReference type="FunFam" id="3.40.50.10490:FF:000028">
    <property type="entry name" value="HTH-type transcriptional regulator MurR"/>
    <property type="match status" value="1"/>
</dbReference>
<dbReference type="Gene3D" id="3.40.50.10490">
    <property type="entry name" value="Glucose-6-phosphate isomerase like protein, domain 1"/>
    <property type="match status" value="1"/>
</dbReference>
<dbReference type="Gene3D" id="1.10.10.10">
    <property type="entry name" value="Winged helix-like DNA-binding domain superfamily/Winged helix DNA-binding domain"/>
    <property type="match status" value="1"/>
</dbReference>
<dbReference type="HAMAP" id="MF_02108">
    <property type="entry name" value="HTH_type_MurR"/>
    <property type="match status" value="1"/>
</dbReference>
<dbReference type="InterPro" id="IPR009057">
    <property type="entry name" value="Homeodomain-like_sf"/>
</dbReference>
<dbReference type="InterPro" id="IPR000281">
    <property type="entry name" value="HTH_RpiR"/>
</dbReference>
<dbReference type="InterPro" id="IPR047640">
    <property type="entry name" value="RpiR-like"/>
</dbReference>
<dbReference type="InterPro" id="IPR035472">
    <property type="entry name" value="RpiR-like_SIS"/>
</dbReference>
<dbReference type="InterPro" id="IPR001347">
    <property type="entry name" value="SIS_dom"/>
</dbReference>
<dbReference type="InterPro" id="IPR046348">
    <property type="entry name" value="SIS_dom_sf"/>
</dbReference>
<dbReference type="InterPro" id="IPR022821">
    <property type="entry name" value="Tscrpt_reg_HTH_MurR"/>
</dbReference>
<dbReference type="InterPro" id="IPR036388">
    <property type="entry name" value="WH-like_DNA-bd_sf"/>
</dbReference>
<dbReference type="NCBIfam" id="NF012026">
    <property type="entry name" value="PRK15482.1"/>
    <property type="match status" value="1"/>
</dbReference>
<dbReference type="PANTHER" id="PTHR30514">
    <property type="entry name" value="GLUCOKINASE"/>
    <property type="match status" value="1"/>
</dbReference>
<dbReference type="PANTHER" id="PTHR30514:SF17">
    <property type="entry name" value="HTH-TYPE TRANSCRIPTIONAL REGULATOR MURR"/>
    <property type="match status" value="1"/>
</dbReference>
<dbReference type="Pfam" id="PF01418">
    <property type="entry name" value="HTH_6"/>
    <property type="match status" value="1"/>
</dbReference>
<dbReference type="Pfam" id="PF01380">
    <property type="entry name" value="SIS"/>
    <property type="match status" value="1"/>
</dbReference>
<dbReference type="SUPFAM" id="SSF46689">
    <property type="entry name" value="Homeodomain-like"/>
    <property type="match status" value="1"/>
</dbReference>
<dbReference type="SUPFAM" id="SSF53697">
    <property type="entry name" value="SIS domain"/>
    <property type="match status" value="1"/>
</dbReference>
<dbReference type="PROSITE" id="PS51071">
    <property type="entry name" value="HTH_RPIR"/>
    <property type="match status" value="1"/>
</dbReference>
<dbReference type="PROSITE" id="PS51464">
    <property type="entry name" value="SIS"/>
    <property type="match status" value="1"/>
</dbReference>
<protein>
    <recommendedName>
        <fullName evidence="1">HTH-type transcriptional regulator MurR</fullName>
    </recommendedName>
    <alternativeName>
        <fullName evidence="1">MurPQ operon repressor</fullName>
    </alternativeName>
</protein>
<keyword id="KW-0119">Carbohydrate metabolism</keyword>
<keyword id="KW-0238">DNA-binding</keyword>
<keyword id="KW-0678">Repressor</keyword>
<keyword id="KW-0804">Transcription</keyword>
<keyword id="KW-0805">Transcription regulation</keyword>
<name>MURR_ECO7I</name>